<reference key="1">
    <citation type="journal article" date="1988" name="J. Mol. Evol.">
        <title>Synonymous nucleotide substitution rates of beta-tubulin and histone genes conform to high overall genomic rates in rodents but not in sea urchins.</title>
        <authorList>
            <person name="Harlow P."/>
            <person name="Litwin S."/>
            <person name="Nemer M."/>
        </authorList>
    </citation>
    <scope>NUCLEOTIDE SEQUENCE [MRNA]</scope>
</reference>
<comment type="function">
    <text>Tubulin is the major constituent of microtubules, a cylinder consisting of laterally associated linear protofilaments composed of alpha- and beta-tubulin heterodimers. Microtubules grow by the addition of GTP-tubulin dimers to the microtubule end, where a stabilizing cap forms. Below the cap, tubulin dimers are in GDP-bound state, owing to GTPase activity of alpha-tubulin.</text>
</comment>
<comment type="cofactor">
    <cofactor evidence="1">
        <name>Mg(2+)</name>
        <dbReference type="ChEBI" id="CHEBI:18420"/>
    </cofactor>
</comment>
<comment type="subunit">
    <text>Dimer of alpha and beta chains. A typical microtubule is a hollow water-filled tube with an outer diameter of 25 nm and an inner diameter of 15 nM. Alpha-beta heterodimers associate head-to-tail to form protofilaments running lengthwise along the microtubule wall with the beta-tubulin subunit facing the microtubule plus end conferring a structural polarity. Microtubules usually have 13 protofilaments but different protofilament numbers can be found in some organisms and specialized cells.</text>
</comment>
<comment type="subcellular location">
    <subcellularLocation>
        <location>Cytoplasm</location>
        <location>Cytoskeleton</location>
    </subcellularLocation>
</comment>
<comment type="similarity">
    <text evidence="4">Belongs to the tubulin family.</text>
</comment>
<accession>P18700</accession>
<organism>
    <name type="scientific">Strongylocentrotus purpuratus</name>
    <name type="common">Purple sea urchin</name>
    <dbReference type="NCBI Taxonomy" id="7668"/>
    <lineage>
        <taxon>Eukaryota</taxon>
        <taxon>Metazoa</taxon>
        <taxon>Echinodermata</taxon>
        <taxon>Eleutherozoa</taxon>
        <taxon>Echinozoa</taxon>
        <taxon>Echinoidea</taxon>
        <taxon>Euechinoidea</taxon>
        <taxon>Echinacea</taxon>
        <taxon>Camarodonta</taxon>
        <taxon>Echinidea</taxon>
        <taxon>Strongylocentrotidae</taxon>
        <taxon>Strongylocentrotus</taxon>
    </lineage>
</organism>
<feature type="chain" id="PRO_0000048313" description="Tubulin beta chain">
    <location>
        <begin position="1" status="less than"/>
        <end position="292"/>
    </location>
</feature>
<feature type="region of interest" description="Disordered" evidence="3">
    <location>
        <begin position="265"/>
        <end position="292"/>
    </location>
</feature>
<feature type="compositionally biased region" description="Acidic residues" evidence="3">
    <location>
        <begin position="274"/>
        <end position="292"/>
    </location>
</feature>
<feature type="binding site" evidence="2">
    <location>
        <position position="49"/>
    </location>
    <ligand>
        <name>GTP</name>
        <dbReference type="ChEBI" id="CHEBI:37565"/>
    </ligand>
</feature>
<feature type="binding site" evidence="2">
    <location>
        <position position="71"/>
    </location>
    <ligand>
        <name>GTP</name>
        <dbReference type="ChEBI" id="CHEBI:37565"/>
    </ligand>
</feature>
<feature type="non-terminal residue">
    <location>
        <position position="1"/>
    </location>
</feature>
<dbReference type="EMBL" id="X07502">
    <property type="protein sequence ID" value="CAA30385.1"/>
    <property type="molecule type" value="mRNA"/>
</dbReference>
<dbReference type="PIR" id="S02327">
    <property type="entry name" value="S02327"/>
</dbReference>
<dbReference type="SMR" id="P18700"/>
<dbReference type="STRING" id="7668.P18700"/>
<dbReference type="eggNOG" id="KOG1375">
    <property type="taxonomic scope" value="Eukaryota"/>
</dbReference>
<dbReference type="HOGENOM" id="CLU_015718_1_1_1"/>
<dbReference type="InParanoid" id="P18700"/>
<dbReference type="Proteomes" id="UP000007110">
    <property type="component" value="Unassembled WGS sequence"/>
</dbReference>
<dbReference type="GO" id="GO:0005737">
    <property type="term" value="C:cytoplasm"/>
    <property type="evidence" value="ECO:0007669"/>
    <property type="project" value="UniProtKB-KW"/>
</dbReference>
<dbReference type="GO" id="GO:0005874">
    <property type="term" value="C:microtubule"/>
    <property type="evidence" value="ECO:0007669"/>
    <property type="project" value="UniProtKB-KW"/>
</dbReference>
<dbReference type="GO" id="GO:0005525">
    <property type="term" value="F:GTP binding"/>
    <property type="evidence" value="ECO:0007669"/>
    <property type="project" value="UniProtKB-KW"/>
</dbReference>
<dbReference type="GO" id="GO:0003924">
    <property type="term" value="F:GTPase activity"/>
    <property type="evidence" value="ECO:0007669"/>
    <property type="project" value="InterPro"/>
</dbReference>
<dbReference type="GO" id="GO:0005200">
    <property type="term" value="F:structural constituent of cytoskeleton"/>
    <property type="evidence" value="ECO:0007669"/>
    <property type="project" value="InterPro"/>
</dbReference>
<dbReference type="GO" id="GO:0007017">
    <property type="term" value="P:microtubule-based process"/>
    <property type="evidence" value="ECO:0007669"/>
    <property type="project" value="InterPro"/>
</dbReference>
<dbReference type="CDD" id="cd02187">
    <property type="entry name" value="beta_tubulin"/>
    <property type="match status" value="1"/>
</dbReference>
<dbReference type="FunFam" id="1.10.287.600:FF:000006">
    <property type="entry name" value="Tubulin beta chain"/>
    <property type="match status" value="1"/>
</dbReference>
<dbReference type="FunFam" id="3.30.1330.20:FF:000002">
    <property type="entry name" value="Tubulin beta chain"/>
    <property type="match status" value="1"/>
</dbReference>
<dbReference type="FunFam" id="3.40.50.1440:FF:000030">
    <property type="entry name" value="tubulin beta chain isoform X5"/>
    <property type="match status" value="1"/>
</dbReference>
<dbReference type="Gene3D" id="1.10.287.600">
    <property type="entry name" value="Helix hairpin bin"/>
    <property type="match status" value="1"/>
</dbReference>
<dbReference type="Gene3D" id="3.30.1330.20">
    <property type="entry name" value="Tubulin/FtsZ, C-terminal domain"/>
    <property type="match status" value="1"/>
</dbReference>
<dbReference type="Gene3D" id="3.40.50.1440">
    <property type="entry name" value="Tubulin/FtsZ, GTPase domain"/>
    <property type="match status" value="1"/>
</dbReference>
<dbReference type="InterPro" id="IPR002453">
    <property type="entry name" value="Beta_tubulin"/>
</dbReference>
<dbReference type="InterPro" id="IPR008280">
    <property type="entry name" value="Tub_FtsZ_C"/>
</dbReference>
<dbReference type="InterPro" id="IPR000217">
    <property type="entry name" value="Tubulin"/>
</dbReference>
<dbReference type="InterPro" id="IPR037103">
    <property type="entry name" value="Tubulin/FtsZ-like_C"/>
</dbReference>
<dbReference type="InterPro" id="IPR018316">
    <property type="entry name" value="Tubulin/FtsZ_2-layer-sand-dom"/>
</dbReference>
<dbReference type="InterPro" id="IPR036525">
    <property type="entry name" value="Tubulin/FtsZ_GTPase_sf"/>
</dbReference>
<dbReference type="InterPro" id="IPR023123">
    <property type="entry name" value="Tubulin_C"/>
</dbReference>
<dbReference type="InterPro" id="IPR003008">
    <property type="entry name" value="Tubulin_FtsZ_GTPase"/>
</dbReference>
<dbReference type="PANTHER" id="PTHR11588">
    <property type="entry name" value="TUBULIN"/>
    <property type="match status" value="1"/>
</dbReference>
<dbReference type="Pfam" id="PF00091">
    <property type="entry name" value="Tubulin"/>
    <property type="match status" value="1"/>
</dbReference>
<dbReference type="Pfam" id="PF03953">
    <property type="entry name" value="Tubulin_C"/>
    <property type="match status" value="1"/>
</dbReference>
<dbReference type="PRINTS" id="PR01163">
    <property type="entry name" value="BETATUBULIN"/>
</dbReference>
<dbReference type="PRINTS" id="PR01161">
    <property type="entry name" value="TUBULIN"/>
</dbReference>
<dbReference type="SMART" id="SM00865">
    <property type="entry name" value="Tubulin_C"/>
    <property type="match status" value="1"/>
</dbReference>
<dbReference type="SUPFAM" id="SSF55307">
    <property type="entry name" value="Tubulin C-terminal domain-like"/>
    <property type="match status" value="1"/>
</dbReference>
<dbReference type="SUPFAM" id="SSF52490">
    <property type="entry name" value="Tubulin nucleotide-binding domain-like"/>
    <property type="match status" value="1"/>
</dbReference>
<evidence type="ECO:0000250" key="1">
    <source>
        <dbReference type="UniProtKB" id="P68363"/>
    </source>
</evidence>
<evidence type="ECO:0000250" key="2">
    <source>
        <dbReference type="UniProtKB" id="Q13509"/>
    </source>
</evidence>
<evidence type="ECO:0000256" key="3">
    <source>
        <dbReference type="SAM" id="MobiDB-lite"/>
    </source>
</evidence>
<evidence type="ECO:0000305" key="4"/>
<sequence length="292" mass="33345">REEYPDRIMNTFSVVPSPKVSDTVVEPYNATLSVHQLVENTDETYCIDNEALYDICFRTLKLTTPTYGDLNHLVSATMSGVTTCLRFPGQLNADLRKLAVNMVPFPRLHFFMPGFAPLTSRGSQQYRALTVPELTQQMFDAKNMMAACDPRHGRYLTVAAIFRGRMSMKEVDEQMLNVQNKNSSYFVEWIPNNVKTAVCDIPPRGLKMSATFIGNSTAIQELFKRISEQFTAMFRRKAFLHWYTGEGMDEMEFTEAESNMNDLVSEYQQYQDATAEEEGEFDEEEEGDEEAA</sequence>
<protein>
    <recommendedName>
        <fullName>Tubulin beta chain</fullName>
    </recommendedName>
    <alternativeName>
        <fullName>Beta-tubulin</fullName>
    </alternativeName>
</protein>
<name>TBB_STRPU</name>
<keyword id="KW-0963">Cytoplasm</keyword>
<keyword id="KW-0206">Cytoskeleton</keyword>
<keyword id="KW-0342">GTP-binding</keyword>
<keyword id="KW-0493">Microtubule</keyword>
<keyword id="KW-0547">Nucleotide-binding</keyword>
<keyword id="KW-1185">Reference proteome</keyword>
<proteinExistence type="evidence at transcript level"/>